<dbReference type="EC" id="2.3.2.6" evidence="1"/>
<dbReference type="EMBL" id="CU928145">
    <property type="protein sequence ID" value="CAU96794.1"/>
    <property type="molecule type" value="Genomic_DNA"/>
</dbReference>
<dbReference type="RefSeq" id="WP_001241678.1">
    <property type="nucleotide sequence ID" value="NC_011748.1"/>
</dbReference>
<dbReference type="SMR" id="B7LD77"/>
<dbReference type="GeneID" id="75206174"/>
<dbReference type="KEGG" id="eck:EC55989_0930"/>
<dbReference type="HOGENOM" id="CLU_075045_0_0_6"/>
<dbReference type="Proteomes" id="UP000000746">
    <property type="component" value="Chromosome"/>
</dbReference>
<dbReference type="GO" id="GO:0005737">
    <property type="term" value="C:cytoplasm"/>
    <property type="evidence" value="ECO:0007669"/>
    <property type="project" value="UniProtKB-SubCell"/>
</dbReference>
<dbReference type="GO" id="GO:0008914">
    <property type="term" value="F:leucyl-tRNA--protein transferase activity"/>
    <property type="evidence" value="ECO:0007669"/>
    <property type="project" value="UniProtKB-UniRule"/>
</dbReference>
<dbReference type="GO" id="GO:0030163">
    <property type="term" value="P:protein catabolic process"/>
    <property type="evidence" value="ECO:0007669"/>
    <property type="project" value="UniProtKB-UniRule"/>
</dbReference>
<dbReference type="FunFam" id="3.30.70.3550:FF:000001">
    <property type="entry name" value="Leucyl/phenylalanyl-tRNA--protein transferase"/>
    <property type="match status" value="1"/>
</dbReference>
<dbReference type="FunFam" id="3.40.630.70:FF:000001">
    <property type="entry name" value="Leucyl/phenylalanyl-tRNA--protein transferase"/>
    <property type="match status" value="1"/>
</dbReference>
<dbReference type="Gene3D" id="3.40.630.70">
    <property type="entry name" value="Leucyl/phenylalanyl-tRNA-protein transferase, C-terminal domain"/>
    <property type="match status" value="1"/>
</dbReference>
<dbReference type="Gene3D" id="3.30.70.3550">
    <property type="entry name" value="Leucyl/phenylalanyl-tRNA-protein transferase, N-terminal domain"/>
    <property type="match status" value="1"/>
</dbReference>
<dbReference type="HAMAP" id="MF_00688">
    <property type="entry name" value="Leu_Phe_trans"/>
    <property type="match status" value="1"/>
</dbReference>
<dbReference type="InterPro" id="IPR016181">
    <property type="entry name" value="Acyl_CoA_acyltransferase"/>
</dbReference>
<dbReference type="InterPro" id="IPR004616">
    <property type="entry name" value="Leu/Phe-tRNA_Trfase"/>
</dbReference>
<dbReference type="InterPro" id="IPR042203">
    <property type="entry name" value="Leu/Phe-tRNA_Trfase_C"/>
</dbReference>
<dbReference type="InterPro" id="IPR042221">
    <property type="entry name" value="Leu/Phe-tRNA_Trfase_N"/>
</dbReference>
<dbReference type="NCBIfam" id="TIGR00667">
    <property type="entry name" value="aat"/>
    <property type="match status" value="1"/>
</dbReference>
<dbReference type="PANTHER" id="PTHR30098">
    <property type="entry name" value="LEUCYL/PHENYLALANYL-TRNA--PROTEIN TRANSFERASE"/>
    <property type="match status" value="1"/>
</dbReference>
<dbReference type="PANTHER" id="PTHR30098:SF2">
    <property type="entry name" value="LEUCYL_PHENYLALANYL-TRNA--PROTEIN TRANSFERASE"/>
    <property type="match status" value="1"/>
</dbReference>
<dbReference type="Pfam" id="PF03588">
    <property type="entry name" value="Leu_Phe_trans"/>
    <property type="match status" value="1"/>
</dbReference>
<dbReference type="SUPFAM" id="SSF55729">
    <property type="entry name" value="Acyl-CoA N-acyltransferases (Nat)"/>
    <property type="match status" value="1"/>
</dbReference>
<reference key="1">
    <citation type="journal article" date="2009" name="PLoS Genet.">
        <title>Organised genome dynamics in the Escherichia coli species results in highly diverse adaptive paths.</title>
        <authorList>
            <person name="Touchon M."/>
            <person name="Hoede C."/>
            <person name="Tenaillon O."/>
            <person name="Barbe V."/>
            <person name="Baeriswyl S."/>
            <person name="Bidet P."/>
            <person name="Bingen E."/>
            <person name="Bonacorsi S."/>
            <person name="Bouchier C."/>
            <person name="Bouvet O."/>
            <person name="Calteau A."/>
            <person name="Chiapello H."/>
            <person name="Clermont O."/>
            <person name="Cruveiller S."/>
            <person name="Danchin A."/>
            <person name="Diard M."/>
            <person name="Dossat C."/>
            <person name="Karoui M.E."/>
            <person name="Frapy E."/>
            <person name="Garry L."/>
            <person name="Ghigo J.M."/>
            <person name="Gilles A.M."/>
            <person name="Johnson J."/>
            <person name="Le Bouguenec C."/>
            <person name="Lescat M."/>
            <person name="Mangenot S."/>
            <person name="Martinez-Jehanne V."/>
            <person name="Matic I."/>
            <person name="Nassif X."/>
            <person name="Oztas S."/>
            <person name="Petit M.A."/>
            <person name="Pichon C."/>
            <person name="Rouy Z."/>
            <person name="Ruf C.S."/>
            <person name="Schneider D."/>
            <person name="Tourret J."/>
            <person name="Vacherie B."/>
            <person name="Vallenet D."/>
            <person name="Medigue C."/>
            <person name="Rocha E.P.C."/>
            <person name="Denamur E."/>
        </authorList>
    </citation>
    <scope>NUCLEOTIDE SEQUENCE [LARGE SCALE GENOMIC DNA]</scope>
    <source>
        <strain>55989 / EAEC</strain>
    </source>
</reference>
<proteinExistence type="inferred from homology"/>
<protein>
    <recommendedName>
        <fullName evidence="1">Leucyl/phenylalanyl-tRNA--protein transferase</fullName>
        <ecNumber evidence="1">2.3.2.6</ecNumber>
    </recommendedName>
    <alternativeName>
        <fullName evidence="1">L/F-transferase</fullName>
    </alternativeName>
    <alternativeName>
        <fullName evidence="1">Leucyltransferase</fullName>
    </alternativeName>
    <alternativeName>
        <fullName evidence="1">Phenyalanyltransferase</fullName>
    </alternativeName>
</protein>
<organism>
    <name type="scientific">Escherichia coli (strain 55989 / EAEC)</name>
    <dbReference type="NCBI Taxonomy" id="585055"/>
    <lineage>
        <taxon>Bacteria</taxon>
        <taxon>Pseudomonadati</taxon>
        <taxon>Pseudomonadota</taxon>
        <taxon>Gammaproteobacteria</taxon>
        <taxon>Enterobacterales</taxon>
        <taxon>Enterobacteriaceae</taxon>
        <taxon>Escherichia</taxon>
    </lineage>
</organism>
<gene>
    <name evidence="1" type="primary">aat</name>
    <name type="ordered locus">EC55989_0930</name>
</gene>
<feature type="chain" id="PRO_1000147790" description="Leucyl/phenylalanyl-tRNA--protein transferase">
    <location>
        <begin position="1"/>
        <end position="234"/>
    </location>
</feature>
<accession>B7LD77</accession>
<keyword id="KW-0012">Acyltransferase</keyword>
<keyword id="KW-0963">Cytoplasm</keyword>
<keyword id="KW-1185">Reference proteome</keyword>
<keyword id="KW-0808">Transferase</keyword>
<name>LFTR_ECO55</name>
<evidence type="ECO:0000255" key="1">
    <source>
        <dbReference type="HAMAP-Rule" id="MF_00688"/>
    </source>
</evidence>
<comment type="function">
    <text evidence="1">Functions in the N-end rule pathway of protein degradation where it conjugates Leu, Phe and, less efficiently, Met from aminoacyl-tRNAs to the N-termini of proteins containing an N-terminal arginine or lysine.</text>
</comment>
<comment type="catalytic activity">
    <reaction evidence="1">
        <text>N-terminal L-lysyl-[protein] + L-leucyl-tRNA(Leu) = N-terminal L-leucyl-L-lysyl-[protein] + tRNA(Leu) + H(+)</text>
        <dbReference type="Rhea" id="RHEA:12340"/>
        <dbReference type="Rhea" id="RHEA-COMP:9613"/>
        <dbReference type="Rhea" id="RHEA-COMP:9622"/>
        <dbReference type="Rhea" id="RHEA-COMP:12670"/>
        <dbReference type="Rhea" id="RHEA-COMP:12671"/>
        <dbReference type="ChEBI" id="CHEBI:15378"/>
        <dbReference type="ChEBI" id="CHEBI:65249"/>
        <dbReference type="ChEBI" id="CHEBI:78442"/>
        <dbReference type="ChEBI" id="CHEBI:78494"/>
        <dbReference type="ChEBI" id="CHEBI:133043"/>
        <dbReference type="EC" id="2.3.2.6"/>
    </reaction>
</comment>
<comment type="catalytic activity">
    <reaction evidence="1">
        <text>N-terminal L-arginyl-[protein] + L-leucyl-tRNA(Leu) = N-terminal L-leucyl-L-arginyl-[protein] + tRNA(Leu) + H(+)</text>
        <dbReference type="Rhea" id="RHEA:50416"/>
        <dbReference type="Rhea" id="RHEA-COMP:9613"/>
        <dbReference type="Rhea" id="RHEA-COMP:9622"/>
        <dbReference type="Rhea" id="RHEA-COMP:12672"/>
        <dbReference type="Rhea" id="RHEA-COMP:12673"/>
        <dbReference type="ChEBI" id="CHEBI:15378"/>
        <dbReference type="ChEBI" id="CHEBI:64719"/>
        <dbReference type="ChEBI" id="CHEBI:78442"/>
        <dbReference type="ChEBI" id="CHEBI:78494"/>
        <dbReference type="ChEBI" id="CHEBI:133044"/>
        <dbReference type="EC" id="2.3.2.6"/>
    </reaction>
</comment>
<comment type="catalytic activity">
    <reaction evidence="1">
        <text>L-phenylalanyl-tRNA(Phe) + an N-terminal L-alpha-aminoacyl-[protein] = an N-terminal L-phenylalanyl-L-alpha-aminoacyl-[protein] + tRNA(Phe)</text>
        <dbReference type="Rhea" id="RHEA:43632"/>
        <dbReference type="Rhea" id="RHEA-COMP:9668"/>
        <dbReference type="Rhea" id="RHEA-COMP:9699"/>
        <dbReference type="Rhea" id="RHEA-COMP:10636"/>
        <dbReference type="Rhea" id="RHEA-COMP:10637"/>
        <dbReference type="ChEBI" id="CHEBI:78442"/>
        <dbReference type="ChEBI" id="CHEBI:78531"/>
        <dbReference type="ChEBI" id="CHEBI:78597"/>
        <dbReference type="ChEBI" id="CHEBI:83561"/>
        <dbReference type="EC" id="2.3.2.6"/>
    </reaction>
</comment>
<comment type="subcellular location">
    <subcellularLocation>
        <location evidence="1">Cytoplasm</location>
    </subcellularLocation>
</comment>
<comment type="similarity">
    <text evidence="1">Belongs to the L/F-transferase family.</text>
</comment>
<sequence length="234" mass="26619">MRLVQLSRHSIAFPSPEGALREPNGLLALGGDLSPARLLMAYQRGIFPWFSPGDPILWWSPDPRAVLWPESLHISRSMKRFHKRSPYRVTMNYAFGQVIEGCASDREEGTWITRGVVEAYHRLHELGHAHSIEVWREDELVGGMYGVAQGTLFCGESMFSRMENASKTALLVFCEEFIGHGGKLIDCQVLNDHTASLGACEIPRRDYLNYLNQMRLGRLPNNFWVPRCLFSPQE</sequence>